<accession>Q21PU3</accession>
<feature type="chain" id="PRO_1000101222" description="Glycine--tRNA ligase alpha subunit">
    <location>
        <begin position="1"/>
        <end position="318"/>
    </location>
</feature>
<keyword id="KW-0030">Aminoacyl-tRNA synthetase</keyword>
<keyword id="KW-0067">ATP-binding</keyword>
<keyword id="KW-0963">Cytoplasm</keyword>
<keyword id="KW-0436">Ligase</keyword>
<keyword id="KW-0547">Nucleotide-binding</keyword>
<keyword id="KW-0648">Protein biosynthesis</keyword>
<keyword id="KW-1185">Reference proteome</keyword>
<gene>
    <name evidence="1" type="primary">glyQ</name>
    <name type="ordered locus">Sde_0013</name>
</gene>
<comment type="catalytic activity">
    <reaction evidence="1">
        <text>tRNA(Gly) + glycine + ATP = glycyl-tRNA(Gly) + AMP + diphosphate</text>
        <dbReference type="Rhea" id="RHEA:16013"/>
        <dbReference type="Rhea" id="RHEA-COMP:9664"/>
        <dbReference type="Rhea" id="RHEA-COMP:9683"/>
        <dbReference type="ChEBI" id="CHEBI:30616"/>
        <dbReference type="ChEBI" id="CHEBI:33019"/>
        <dbReference type="ChEBI" id="CHEBI:57305"/>
        <dbReference type="ChEBI" id="CHEBI:78442"/>
        <dbReference type="ChEBI" id="CHEBI:78522"/>
        <dbReference type="ChEBI" id="CHEBI:456215"/>
        <dbReference type="EC" id="6.1.1.14"/>
    </reaction>
</comment>
<comment type="subunit">
    <text evidence="1">Tetramer of two alpha and two beta subunits.</text>
</comment>
<comment type="subcellular location">
    <subcellularLocation>
        <location evidence="1">Cytoplasm</location>
    </subcellularLocation>
</comment>
<comment type="similarity">
    <text evidence="1">Belongs to the class-II aminoacyl-tRNA synthetase family.</text>
</comment>
<evidence type="ECO:0000255" key="1">
    <source>
        <dbReference type="HAMAP-Rule" id="MF_00254"/>
    </source>
</evidence>
<sequence>MSKPDVSTFQGLILALQEYWAKQGCVVLQPLDMEVGAGTFHPATFLRAIGPETWNTAYVQPCRRPTDGRYGENPNRLQHYYQFQVALKPSPDNIQELYLGSLAHLGLDTNIHDIRFVEDNWESPTLGAWGLGWEVWLNGMEVTQFTYFQQVGGLECYPVTGEITYGLERIAMYLQDVNSIYDLVWTKRPDGGIVTYGDVFHQNEVEMSHFNFSEANVEFLFQTFDVCEAESRRLIEKGLPLPAYEMVMKASHAFNLLDARQAISVTERQRFILRVRTLARDVAQAYFDARLKLGFPLADPKLRDEVIARVEAEMEKKA</sequence>
<name>SYGA_SACD2</name>
<dbReference type="EC" id="6.1.1.14" evidence="1"/>
<dbReference type="EMBL" id="CP000282">
    <property type="protein sequence ID" value="ABD79277.1"/>
    <property type="molecule type" value="Genomic_DNA"/>
</dbReference>
<dbReference type="RefSeq" id="WP_011466501.1">
    <property type="nucleotide sequence ID" value="NC_007912.1"/>
</dbReference>
<dbReference type="SMR" id="Q21PU3"/>
<dbReference type="STRING" id="203122.Sde_0013"/>
<dbReference type="GeneID" id="98611733"/>
<dbReference type="KEGG" id="sde:Sde_0013"/>
<dbReference type="eggNOG" id="COG0752">
    <property type="taxonomic scope" value="Bacteria"/>
</dbReference>
<dbReference type="HOGENOM" id="CLU_057066_1_0_6"/>
<dbReference type="OrthoDB" id="9802183at2"/>
<dbReference type="Proteomes" id="UP000001947">
    <property type="component" value="Chromosome"/>
</dbReference>
<dbReference type="GO" id="GO:0005829">
    <property type="term" value="C:cytosol"/>
    <property type="evidence" value="ECO:0007669"/>
    <property type="project" value="TreeGrafter"/>
</dbReference>
<dbReference type="GO" id="GO:0005524">
    <property type="term" value="F:ATP binding"/>
    <property type="evidence" value="ECO:0007669"/>
    <property type="project" value="UniProtKB-UniRule"/>
</dbReference>
<dbReference type="GO" id="GO:0004820">
    <property type="term" value="F:glycine-tRNA ligase activity"/>
    <property type="evidence" value="ECO:0007669"/>
    <property type="project" value="UniProtKB-UniRule"/>
</dbReference>
<dbReference type="GO" id="GO:0006426">
    <property type="term" value="P:glycyl-tRNA aminoacylation"/>
    <property type="evidence" value="ECO:0007669"/>
    <property type="project" value="UniProtKB-UniRule"/>
</dbReference>
<dbReference type="CDD" id="cd00733">
    <property type="entry name" value="GlyRS_alpha_core"/>
    <property type="match status" value="1"/>
</dbReference>
<dbReference type="FunFam" id="3.30.930.10:FF:000006">
    <property type="entry name" value="Glycine--tRNA ligase alpha subunit"/>
    <property type="match status" value="1"/>
</dbReference>
<dbReference type="Gene3D" id="3.30.930.10">
    <property type="entry name" value="Bira Bifunctional Protein, Domain 2"/>
    <property type="match status" value="1"/>
</dbReference>
<dbReference type="Gene3D" id="1.20.58.180">
    <property type="entry name" value="Class II aaRS and biotin synthetases, domain 2"/>
    <property type="match status" value="1"/>
</dbReference>
<dbReference type="HAMAP" id="MF_00254">
    <property type="entry name" value="Gly_tRNA_synth_alpha"/>
    <property type="match status" value="1"/>
</dbReference>
<dbReference type="InterPro" id="IPR045864">
    <property type="entry name" value="aa-tRNA-synth_II/BPL/LPL"/>
</dbReference>
<dbReference type="InterPro" id="IPR006194">
    <property type="entry name" value="Gly-tRNA-synth_heterodimer"/>
</dbReference>
<dbReference type="InterPro" id="IPR002310">
    <property type="entry name" value="Gly-tRNA_ligase_asu"/>
</dbReference>
<dbReference type="NCBIfam" id="TIGR00388">
    <property type="entry name" value="glyQ"/>
    <property type="match status" value="1"/>
</dbReference>
<dbReference type="NCBIfam" id="NF006827">
    <property type="entry name" value="PRK09348.1"/>
    <property type="match status" value="1"/>
</dbReference>
<dbReference type="PANTHER" id="PTHR30075:SF2">
    <property type="entry name" value="GLYCINE--TRNA LIGASE, CHLOROPLASTIC_MITOCHONDRIAL 2"/>
    <property type="match status" value="1"/>
</dbReference>
<dbReference type="PANTHER" id="PTHR30075">
    <property type="entry name" value="GLYCYL-TRNA SYNTHETASE"/>
    <property type="match status" value="1"/>
</dbReference>
<dbReference type="Pfam" id="PF02091">
    <property type="entry name" value="tRNA-synt_2e"/>
    <property type="match status" value="1"/>
</dbReference>
<dbReference type="PRINTS" id="PR01044">
    <property type="entry name" value="TRNASYNTHGA"/>
</dbReference>
<dbReference type="SUPFAM" id="SSF55681">
    <property type="entry name" value="Class II aaRS and biotin synthetases"/>
    <property type="match status" value="1"/>
</dbReference>
<dbReference type="PROSITE" id="PS50861">
    <property type="entry name" value="AA_TRNA_LIGASE_II_GLYAB"/>
    <property type="match status" value="1"/>
</dbReference>
<reference key="1">
    <citation type="journal article" date="2008" name="PLoS Genet.">
        <title>Complete genome sequence of the complex carbohydrate-degrading marine bacterium, Saccharophagus degradans strain 2-40 T.</title>
        <authorList>
            <person name="Weiner R.M."/>
            <person name="Taylor L.E. II"/>
            <person name="Henrissat B."/>
            <person name="Hauser L."/>
            <person name="Land M."/>
            <person name="Coutinho P.M."/>
            <person name="Rancurel C."/>
            <person name="Saunders E.H."/>
            <person name="Longmire A.G."/>
            <person name="Zhang H."/>
            <person name="Bayer E.A."/>
            <person name="Gilbert H.J."/>
            <person name="Larimer F."/>
            <person name="Zhulin I.B."/>
            <person name="Ekborg N.A."/>
            <person name="Lamed R."/>
            <person name="Richardson P.M."/>
            <person name="Borovok I."/>
            <person name="Hutcheson S."/>
        </authorList>
    </citation>
    <scope>NUCLEOTIDE SEQUENCE [LARGE SCALE GENOMIC DNA]</scope>
    <source>
        <strain>2-40 / ATCC 43961 / DSM 17024</strain>
    </source>
</reference>
<protein>
    <recommendedName>
        <fullName evidence="1">Glycine--tRNA ligase alpha subunit</fullName>
        <ecNumber evidence="1">6.1.1.14</ecNumber>
    </recommendedName>
    <alternativeName>
        <fullName evidence="1">Glycyl-tRNA synthetase alpha subunit</fullName>
        <shortName evidence="1">GlyRS</shortName>
    </alternativeName>
</protein>
<proteinExistence type="inferred from homology"/>
<organism>
    <name type="scientific">Saccharophagus degradans (strain 2-40 / ATCC 43961 / DSM 17024)</name>
    <dbReference type="NCBI Taxonomy" id="203122"/>
    <lineage>
        <taxon>Bacteria</taxon>
        <taxon>Pseudomonadati</taxon>
        <taxon>Pseudomonadota</taxon>
        <taxon>Gammaproteobacteria</taxon>
        <taxon>Cellvibrionales</taxon>
        <taxon>Cellvibrionaceae</taxon>
        <taxon>Saccharophagus</taxon>
    </lineage>
</organism>